<accession>Q0I270</accession>
<organism>
    <name type="scientific">Histophilus somni (strain 129Pt)</name>
    <name type="common">Haemophilus somnus</name>
    <dbReference type="NCBI Taxonomy" id="205914"/>
    <lineage>
        <taxon>Bacteria</taxon>
        <taxon>Pseudomonadati</taxon>
        <taxon>Pseudomonadota</taxon>
        <taxon>Gammaproteobacteria</taxon>
        <taxon>Pasteurellales</taxon>
        <taxon>Pasteurellaceae</taxon>
        <taxon>Histophilus</taxon>
    </lineage>
</organism>
<comment type="similarity">
    <text evidence="1">Belongs to the UPF0246 family.</text>
</comment>
<sequence>MLAIISPAKTLDWESAVPNFTFSQPHLTAYSEKLINICRQLSPAQISSLMSISDKLAGLNVARFEQWQIEHNEQNSRAAIYAFKGDVYTGLEVETLSRDDIQFAQQHLRVLSGLYGVLRPLDLMQPYRLEMGTKLANEKGKDLYAFWGNIITDALQQAIEQQGDKILVNLASDEYYKSIQENQLGVKIIKPVFLDNKGGKYKVISFYAKKARGLMCRYIIQHRVTDIEQLKEFDLGGYQFNPSSSTQTEFVFKRDVIK</sequence>
<gene>
    <name type="ordered locus">HS_0482</name>
</gene>
<evidence type="ECO:0000255" key="1">
    <source>
        <dbReference type="HAMAP-Rule" id="MF_00652"/>
    </source>
</evidence>
<name>Y482_HISS1</name>
<reference key="1">
    <citation type="journal article" date="2007" name="J. Bacteriol.">
        <title>Complete genome sequence of Haemophilus somnus (Histophilus somni) strain 129Pt and comparison to Haemophilus ducreyi 35000HP and Haemophilus influenzae Rd.</title>
        <authorList>
            <person name="Challacombe J.F."/>
            <person name="Duncan A.J."/>
            <person name="Brettin T.S."/>
            <person name="Bruce D."/>
            <person name="Chertkov O."/>
            <person name="Detter J.C."/>
            <person name="Han C.S."/>
            <person name="Misra M."/>
            <person name="Richardson P."/>
            <person name="Tapia R."/>
            <person name="Thayer N."/>
            <person name="Xie G."/>
            <person name="Inzana T.J."/>
        </authorList>
    </citation>
    <scope>NUCLEOTIDE SEQUENCE [LARGE SCALE GENOMIC DNA]</scope>
    <source>
        <strain>129Pt</strain>
    </source>
</reference>
<dbReference type="EMBL" id="CP000436">
    <property type="protein sequence ID" value="ABI24759.1"/>
    <property type="molecule type" value="Genomic_DNA"/>
</dbReference>
<dbReference type="SMR" id="Q0I270"/>
<dbReference type="KEGG" id="hso:HS_0482"/>
<dbReference type="eggNOG" id="COG3022">
    <property type="taxonomic scope" value="Bacteria"/>
</dbReference>
<dbReference type="HOGENOM" id="CLU_061989_0_0_6"/>
<dbReference type="GO" id="GO:0005829">
    <property type="term" value="C:cytosol"/>
    <property type="evidence" value="ECO:0007669"/>
    <property type="project" value="TreeGrafter"/>
</dbReference>
<dbReference type="GO" id="GO:0033194">
    <property type="term" value="P:response to hydroperoxide"/>
    <property type="evidence" value="ECO:0007669"/>
    <property type="project" value="TreeGrafter"/>
</dbReference>
<dbReference type="HAMAP" id="MF_00652">
    <property type="entry name" value="UPF0246"/>
    <property type="match status" value="1"/>
</dbReference>
<dbReference type="InterPro" id="IPR005583">
    <property type="entry name" value="YaaA"/>
</dbReference>
<dbReference type="NCBIfam" id="NF002541">
    <property type="entry name" value="PRK02101.1-1"/>
    <property type="match status" value="1"/>
</dbReference>
<dbReference type="NCBIfam" id="NF002542">
    <property type="entry name" value="PRK02101.1-3"/>
    <property type="match status" value="1"/>
</dbReference>
<dbReference type="PANTHER" id="PTHR30283:SF4">
    <property type="entry name" value="PEROXIDE STRESS RESISTANCE PROTEIN YAAA"/>
    <property type="match status" value="1"/>
</dbReference>
<dbReference type="PANTHER" id="PTHR30283">
    <property type="entry name" value="PEROXIDE STRESS RESPONSE PROTEIN YAAA"/>
    <property type="match status" value="1"/>
</dbReference>
<dbReference type="Pfam" id="PF03883">
    <property type="entry name" value="H2O2_YaaD"/>
    <property type="match status" value="1"/>
</dbReference>
<feature type="chain" id="PRO_0000262022" description="UPF0246 protein HS_0482">
    <location>
        <begin position="1"/>
        <end position="258"/>
    </location>
</feature>
<proteinExistence type="inferred from homology"/>
<protein>
    <recommendedName>
        <fullName evidence="1">UPF0246 protein HS_0482</fullName>
    </recommendedName>
</protein>